<dbReference type="EC" id="3.4.21.92" evidence="1"/>
<dbReference type="EMBL" id="CP000057">
    <property type="protein sequence ID" value="AAX87742.1"/>
    <property type="molecule type" value="Genomic_DNA"/>
</dbReference>
<dbReference type="RefSeq" id="WP_005694635.1">
    <property type="nucleotide sequence ID" value="NC_007146.2"/>
</dbReference>
<dbReference type="SMR" id="Q4QMK5"/>
<dbReference type="MEROPS" id="S14.001"/>
<dbReference type="KEGG" id="hit:NTHI0844"/>
<dbReference type="HOGENOM" id="CLU_058707_3_2_6"/>
<dbReference type="Proteomes" id="UP000002525">
    <property type="component" value="Chromosome"/>
</dbReference>
<dbReference type="GO" id="GO:0005737">
    <property type="term" value="C:cytoplasm"/>
    <property type="evidence" value="ECO:0007669"/>
    <property type="project" value="UniProtKB-SubCell"/>
</dbReference>
<dbReference type="GO" id="GO:0009368">
    <property type="term" value="C:endopeptidase Clp complex"/>
    <property type="evidence" value="ECO:0007669"/>
    <property type="project" value="TreeGrafter"/>
</dbReference>
<dbReference type="GO" id="GO:0004176">
    <property type="term" value="F:ATP-dependent peptidase activity"/>
    <property type="evidence" value="ECO:0007669"/>
    <property type="project" value="InterPro"/>
</dbReference>
<dbReference type="GO" id="GO:0051117">
    <property type="term" value="F:ATPase binding"/>
    <property type="evidence" value="ECO:0007669"/>
    <property type="project" value="TreeGrafter"/>
</dbReference>
<dbReference type="GO" id="GO:0004252">
    <property type="term" value="F:serine-type endopeptidase activity"/>
    <property type="evidence" value="ECO:0007669"/>
    <property type="project" value="UniProtKB-UniRule"/>
</dbReference>
<dbReference type="GO" id="GO:0006515">
    <property type="term" value="P:protein quality control for misfolded or incompletely synthesized proteins"/>
    <property type="evidence" value="ECO:0007669"/>
    <property type="project" value="TreeGrafter"/>
</dbReference>
<dbReference type="CDD" id="cd07017">
    <property type="entry name" value="S14_ClpP_2"/>
    <property type="match status" value="1"/>
</dbReference>
<dbReference type="FunFam" id="3.90.226.10:FF:000001">
    <property type="entry name" value="ATP-dependent Clp protease proteolytic subunit"/>
    <property type="match status" value="1"/>
</dbReference>
<dbReference type="Gene3D" id="3.90.226.10">
    <property type="entry name" value="2-enoyl-CoA Hydratase, Chain A, domain 1"/>
    <property type="match status" value="1"/>
</dbReference>
<dbReference type="HAMAP" id="MF_00444">
    <property type="entry name" value="ClpP"/>
    <property type="match status" value="1"/>
</dbReference>
<dbReference type="InterPro" id="IPR001907">
    <property type="entry name" value="ClpP"/>
</dbReference>
<dbReference type="InterPro" id="IPR029045">
    <property type="entry name" value="ClpP/crotonase-like_dom_sf"/>
</dbReference>
<dbReference type="InterPro" id="IPR023562">
    <property type="entry name" value="ClpP/TepA"/>
</dbReference>
<dbReference type="InterPro" id="IPR033135">
    <property type="entry name" value="ClpP_His_AS"/>
</dbReference>
<dbReference type="InterPro" id="IPR018215">
    <property type="entry name" value="ClpP_Ser_AS"/>
</dbReference>
<dbReference type="NCBIfam" id="TIGR00493">
    <property type="entry name" value="clpP"/>
    <property type="match status" value="1"/>
</dbReference>
<dbReference type="NCBIfam" id="NF001368">
    <property type="entry name" value="PRK00277.1"/>
    <property type="match status" value="1"/>
</dbReference>
<dbReference type="NCBIfam" id="NF009205">
    <property type="entry name" value="PRK12553.1"/>
    <property type="match status" value="1"/>
</dbReference>
<dbReference type="PANTHER" id="PTHR10381">
    <property type="entry name" value="ATP-DEPENDENT CLP PROTEASE PROTEOLYTIC SUBUNIT"/>
    <property type="match status" value="1"/>
</dbReference>
<dbReference type="PANTHER" id="PTHR10381:SF70">
    <property type="entry name" value="ATP-DEPENDENT CLP PROTEASE PROTEOLYTIC SUBUNIT"/>
    <property type="match status" value="1"/>
</dbReference>
<dbReference type="Pfam" id="PF00574">
    <property type="entry name" value="CLP_protease"/>
    <property type="match status" value="1"/>
</dbReference>
<dbReference type="PRINTS" id="PR00127">
    <property type="entry name" value="CLPPROTEASEP"/>
</dbReference>
<dbReference type="SUPFAM" id="SSF52096">
    <property type="entry name" value="ClpP/crotonase"/>
    <property type="match status" value="1"/>
</dbReference>
<dbReference type="PROSITE" id="PS00382">
    <property type="entry name" value="CLP_PROTEASE_HIS"/>
    <property type="match status" value="1"/>
</dbReference>
<dbReference type="PROSITE" id="PS00381">
    <property type="entry name" value="CLP_PROTEASE_SER"/>
    <property type="match status" value="1"/>
</dbReference>
<feature type="chain" id="PRO_0000226449" description="ATP-dependent Clp protease proteolytic subunit">
    <location>
        <begin position="1"/>
        <end position="193"/>
    </location>
</feature>
<feature type="active site" description="Nucleophile" evidence="1">
    <location>
        <position position="98"/>
    </location>
</feature>
<feature type="active site" evidence="1">
    <location>
        <position position="123"/>
    </location>
</feature>
<comment type="function">
    <text evidence="1">Cleaves peptides in various proteins in a process that requires ATP hydrolysis. Has a chymotrypsin-like activity. Plays a major role in the degradation of misfolded proteins.</text>
</comment>
<comment type="catalytic activity">
    <reaction evidence="1">
        <text>Hydrolysis of proteins to small peptides in the presence of ATP and magnesium. alpha-casein is the usual test substrate. In the absence of ATP, only oligopeptides shorter than five residues are hydrolyzed (such as succinyl-Leu-Tyr-|-NHMec, and Leu-Tyr-Leu-|-Tyr-Trp, in which cleavage of the -Tyr-|-Leu- and -Tyr-|-Trp bonds also occurs).</text>
        <dbReference type="EC" id="3.4.21.92"/>
    </reaction>
</comment>
<comment type="subunit">
    <text evidence="1">Fourteen ClpP subunits assemble into 2 heptameric rings which stack back to back to give a disk-like structure with a central cavity, resembling the structure of eukaryotic proteasomes.</text>
</comment>
<comment type="subcellular location">
    <subcellularLocation>
        <location evidence="1">Cytoplasm</location>
    </subcellularLocation>
</comment>
<comment type="similarity">
    <text evidence="1">Belongs to the peptidase S14 family.</text>
</comment>
<organism>
    <name type="scientific">Haemophilus influenzae (strain 86-028NP)</name>
    <dbReference type="NCBI Taxonomy" id="281310"/>
    <lineage>
        <taxon>Bacteria</taxon>
        <taxon>Pseudomonadati</taxon>
        <taxon>Pseudomonadota</taxon>
        <taxon>Gammaproteobacteria</taxon>
        <taxon>Pasteurellales</taxon>
        <taxon>Pasteurellaceae</taxon>
        <taxon>Haemophilus</taxon>
    </lineage>
</organism>
<reference key="1">
    <citation type="journal article" date="2005" name="J. Bacteriol.">
        <title>Genomic sequence of an otitis media isolate of nontypeable Haemophilus influenzae: comparative study with H. influenzae serotype d, strain KW20.</title>
        <authorList>
            <person name="Harrison A."/>
            <person name="Dyer D.W."/>
            <person name="Gillaspy A."/>
            <person name="Ray W.C."/>
            <person name="Mungur R."/>
            <person name="Carson M.B."/>
            <person name="Zhong H."/>
            <person name="Gipson J."/>
            <person name="Gipson M."/>
            <person name="Johnson L.S."/>
            <person name="Lewis L."/>
            <person name="Bakaletz L.O."/>
            <person name="Munson R.S. Jr."/>
        </authorList>
    </citation>
    <scope>NUCLEOTIDE SEQUENCE [LARGE SCALE GENOMIC DNA]</scope>
    <source>
        <strain>86-028NP</strain>
    </source>
</reference>
<accession>Q4QMK5</accession>
<evidence type="ECO:0000255" key="1">
    <source>
        <dbReference type="HAMAP-Rule" id="MF_00444"/>
    </source>
</evidence>
<sequence length="193" mass="21373">MSVIPMVVEQTSRGERSYDIYSRLLKERVIFLSGEVEDRMANLIVAQLLFLESEDPTKDINIYINSPGGSVTAGMAIYDTMQFIKPDIRTLCIGQACSMGAFLLAGGTAGKRAALPNARVMIHQPLGGFRGQASDIQIHAQEILKIKHTLNDRLAFHTGQGIERIEKDTDRDNFMSAEEAQAYGLVDEVLVKR</sequence>
<proteinExistence type="inferred from homology"/>
<gene>
    <name evidence="1" type="primary">clpP</name>
    <name type="ordered locus">NTHI0844</name>
</gene>
<name>CLPP_HAEI8</name>
<keyword id="KW-0963">Cytoplasm</keyword>
<keyword id="KW-0378">Hydrolase</keyword>
<keyword id="KW-0645">Protease</keyword>
<keyword id="KW-0720">Serine protease</keyword>
<protein>
    <recommendedName>
        <fullName evidence="1">ATP-dependent Clp protease proteolytic subunit</fullName>
        <ecNumber evidence="1">3.4.21.92</ecNumber>
    </recommendedName>
    <alternativeName>
        <fullName evidence="1">Endopeptidase Clp</fullName>
    </alternativeName>
</protein>